<dbReference type="EC" id="6.3.4.20" evidence="1"/>
<dbReference type="EMBL" id="CP001252">
    <property type="protein sequence ID" value="ACK46768.1"/>
    <property type="molecule type" value="Genomic_DNA"/>
</dbReference>
<dbReference type="RefSeq" id="WP_011839925.1">
    <property type="nucleotide sequence ID" value="NC_011663.1"/>
</dbReference>
<dbReference type="SMR" id="B8E544"/>
<dbReference type="KEGG" id="sbp:Sbal223_2269"/>
<dbReference type="HOGENOM" id="CLU_081854_0_0_6"/>
<dbReference type="UniPathway" id="UPA00391"/>
<dbReference type="Proteomes" id="UP000002507">
    <property type="component" value="Chromosome"/>
</dbReference>
<dbReference type="GO" id="GO:0005524">
    <property type="term" value="F:ATP binding"/>
    <property type="evidence" value="ECO:0007669"/>
    <property type="project" value="UniProtKB-UniRule"/>
</dbReference>
<dbReference type="GO" id="GO:0016879">
    <property type="term" value="F:ligase activity, forming carbon-nitrogen bonds"/>
    <property type="evidence" value="ECO:0007669"/>
    <property type="project" value="UniProtKB-UniRule"/>
</dbReference>
<dbReference type="GO" id="GO:0008270">
    <property type="term" value="F:zinc ion binding"/>
    <property type="evidence" value="ECO:0007669"/>
    <property type="project" value="UniProtKB-UniRule"/>
</dbReference>
<dbReference type="GO" id="GO:0008616">
    <property type="term" value="P:queuosine biosynthetic process"/>
    <property type="evidence" value="ECO:0007669"/>
    <property type="project" value="UniProtKB-UniRule"/>
</dbReference>
<dbReference type="CDD" id="cd01995">
    <property type="entry name" value="QueC-like"/>
    <property type="match status" value="1"/>
</dbReference>
<dbReference type="FunFam" id="3.40.50.620:FF:000017">
    <property type="entry name" value="7-cyano-7-deazaguanine synthase"/>
    <property type="match status" value="1"/>
</dbReference>
<dbReference type="Gene3D" id="3.40.50.620">
    <property type="entry name" value="HUPs"/>
    <property type="match status" value="1"/>
</dbReference>
<dbReference type="HAMAP" id="MF_01633">
    <property type="entry name" value="QueC"/>
    <property type="match status" value="1"/>
</dbReference>
<dbReference type="InterPro" id="IPR018317">
    <property type="entry name" value="QueC"/>
</dbReference>
<dbReference type="InterPro" id="IPR014729">
    <property type="entry name" value="Rossmann-like_a/b/a_fold"/>
</dbReference>
<dbReference type="NCBIfam" id="TIGR00364">
    <property type="entry name" value="7-cyano-7-deazaguanine synthase QueC"/>
    <property type="match status" value="1"/>
</dbReference>
<dbReference type="NCBIfam" id="NF008317">
    <property type="entry name" value="PRK11106.1"/>
    <property type="match status" value="1"/>
</dbReference>
<dbReference type="PANTHER" id="PTHR42914">
    <property type="entry name" value="7-CYANO-7-DEAZAGUANINE SYNTHASE"/>
    <property type="match status" value="1"/>
</dbReference>
<dbReference type="PANTHER" id="PTHR42914:SF1">
    <property type="entry name" value="7-CYANO-7-DEAZAGUANINE SYNTHASE"/>
    <property type="match status" value="1"/>
</dbReference>
<dbReference type="Pfam" id="PF06508">
    <property type="entry name" value="QueC"/>
    <property type="match status" value="1"/>
</dbReference>
<dbReference type="PIRSF" id="PIRSF006293">
    <property type="entry name" value="ExsB"/>
    <property type="match status" value="1"/>
</dbReference>
<dbReference type="SUPFAM" id="SSF52402">
    <property type="entry name" value="Adenine nucleotide alpha hydrolases-like"/>
    <property type="match status" value="1"/>
</dbReference>
<keyword id="KW-0067">ATP-binding</keyword>
<keyword id="KW-0436">Ligase</keyword>
<keyword id="KW-0479">Metal-binding</keyword>
<keyword id="KW-0547">Nucleotide-binding</keyword>
<keyword id="KW-0671">Queuosine biosynthesis</keyword>
<keyword id="KW-0862">Zinc</keyword>
<evidence type="ECO:0000255" key="1">
    <source>
        <dbReference type="HAMAP-Rule" id="MF_01633"/>
    </source>
</evidence>
<sequence length="240" mass="26413">MSTSLVSKPLASKAVVVFSGGQDSTTCLIQALTQYDEVHGITFDYGQRHREEIEVAKSLAKRLKITSHKVMDVTLLNELAISALTRDAIPVSHELMENGLPNTFVPGRNILFLTLAGIYAYQLGAEAIITGVCETDFSGYPDCRNDFVKAMESALVQGMDKQLKIITPLMWLNKAQTWALADKYQQLDLVRHHTLTCYNGVIGDGCGDCPACHLRKRGLDEYMQDKTAVMASLDASEPKA</sequence>
<accession>B8E544</accession>
<comment type="function">
    <text evidence="1">Catalyzes the ATP-dependent conversion of 7-carboxy-7-deazaguanine (CDG) to 7-cyano-7-deazaguanine (preQ(0)).</text>
</comment>
<comment type="catalytic activity">
    <reaction evidence="1">
        <text>7-carboxy-7-deazaguanine + NH4(+) + ATP = 7-cyano-7-deazaguanine + ADP + phosphate + H2O + H(+)</text>
        <dbReference type="Rhea" id="RHEA:27982"/>
        <dbReference type="ChEBI" id="CHEBI:15377"/>
        <dbReference type="ChEBI" id="CHEBI:15378"/>
        <dbReference type="ChEBI" id="CHEBI:28938"/>
        <dbReference type="ChEBI" id="CHEBI:30616"/>
        <dbReference type="ChEBI" id="CHEBI:43474"/>
        <dbReference type="ChEBI" id="CHEBI:45075"/>
        <dbReference type="ChEBI" id="CHEBI:61036"/>
        <dbReference type="ChEBI" id="CHEBI:456216"/>
        <dbReference type="EC" id="6.3.4.20"/>
    </reaction>
</comment>
<comment type="cofactor">
    <cofactor evidence="1">
        <name>Zn(2+)</name>
        <dbReference type="ChEBI" id="CHEBI:29105"/>
    </cofactor>
    <text evidence="1">Binds 1 zinc ion per subunit.</text>
</comment>
<comment type="pathway">
    <text evidence="1">Purine metabolism; 7-cyano-7-deazaguanine biosynthesis.</text>
</comment>
<comment type="similarity">
    <text evidence="1">Belongs to the QueC family.</text>
</comment>
<organism>
    <name type="scientific">Shewanella baltica (strain OS223)</name>
    <dbReference type="NCBI Taxonomy" id="407976"/>
    <lineage>
        <taxon>Bacteria</taxon>
        <taxon>Pseudomonadati</taxon>
        <taxon>Pseudomonadota</taxon>
        <taxon>Gammaproteobacteria</taxon>
        <taxon>Alteromonadales</taxon>
        <taxon>Shewanellaceae</taxon>
        <taxon>Shewanella</taxon>
    </lineage>
</organism>
<feature type="chain" id="PRO_1000186636" description="7-cyano-7-deazaguanine synthase">
    <location>
        <begin position="1"/>
        <end position="240"/>
    </location>
</feature>
<feature type="binding site" evidence="1">
    <location>
        <begin position="18"/>
        <end position="28"/>
    </location>
    <ligand>
        <name>ATP</name>
        <dbReference type="ChEBI" id="CHEBI:30616"/>
    </ligand>
</feature>
<feature type="binding site" evidence="1">
    <location>
        <position position="197"/>
    </location>
    <ligand>
        <name>Zn(2+)</name>
        <dbReference type="ChEBI" id="CHEBI:29105"/>
    </ligand>
</feature>
<feature type="binding site" evidence="1">
    <location>
        <position position="206"/>
    </location>
    <ligand>
        <name>Zn(2+)</name>
        <dbReference type="ChEBI" id="CHEBI:29105"/>
    </ligand>
</feature>
<feature type="binding site" evidence="1">
    <location>
        <position position="209"/>
    </location>
    <ligand>
        <name>Zn(2+)</name>
        <dbReference type="ChEBI" id="CHEBI:29105"/>
    </ligand>
</feature>
<feature type="binding site" evidence="1">
    <location>
        <position position="212"/>
    </location>
    <ligand>
        <name>Zn(2+)</name>
        <dbReference type="ChEBI" id="CHEBI:29105"/>
    </ligand>
</feature>
<gene>
    <name evidence="1" type="primary">queC</name>
    <name type="ordered locus">Sbal223_2269</name>
</gene>
<protein>
    <recommendedName>
        <fullName evidence="1">7-cyano-7-deazaguanine synthase</fullName>
        <ecNumber evidence="1">6.3.4.20</ecNumber>
    </recommendedName>
    <alternativeName>
        <fullName evidence="1">7-cyano-7-carbaguanine synthase</fullName>
    </alternativeName>
    <alternativeName>
        <fullName evidence="1">PreQ(0) synthase</fullName>
    </alternativeName>
    <alternativeName>
        <fullName evidence="1">Queuosine biosynthesis protein QueC</fullName>
    </alternativeName>
</protein>
<reference key="1">
    <citation type="submission" date="2008-12" db="EMBL/GenBank/DDBJ databases">
        <title>Complete sequence of chromosome of Shewanella baltica OS223.</title>
        <authorList>
            <consortium name="US DOE Joint Genome Institute"/>
            <person name="Lucas S."/>
            <person name="Copeland A."/>
            <person name="Lapidus A."/>
            <person name="Glavina del Rio T."/>
            <person name="Dalin E."/>
            <person name="Tice H."/>
            <person name="Bruce D."/>
            <person name="Goodwin L."/>
            <person name="Pitluck S."/>
            <person name="Chertkov O."/>
            <person name="Meincke L."/>
            <person name="Brettin T."/>
            <person name="Detter J.C."/>
            <person name="Han C."/>
            <person name="Kuske C.R."/>
            <person name="Larimer F."/>
            <person name="Land M."/>
            <person name="Hauser L."/>
            <person name="Kyrpides N."/>
            <person name="Ovchinnikova G."/>
            <person name="Brettar I."/>
            <person name="Rodrigues J."/>
            <person name="Konstantinidis K."/>
            <person name="Tiedje J."/>
        </authorList>
    </citation>
    <scope>NUCLEOTIDE SEQUENCE [LARGE SCALE GENOMIC DNA]</scope>
    <source>
        <strain>OS223</strain>
    </source>
</reference>
<proteinExistence type="inferred from homology"/>
<name>QUEC_SHEB2</name>